<comment type="function">
    <text evidence="1">The alpha subunit is responsible for the aldol cleavage of indoleglycerol phosphate to indole and glyceraldehyde 3-phosphate.</text>
</comment>
<comment type="catalytic activity">
    <reaction evidence="1">
        <text>(1S,2R)-1-C-(indol-3-yl)glycerol 3-phosphate + L-serine = D-glyceraldehyde 3-phosphate + L-tryptophan + H2O</text>
        <dbReference type="Rhea" id="RHEA:10532"/>
        <dbReference type="ChEBI" id="CHEBI:15377"/>
        <dbReference type="ChEBI" id="CHEBI:33384"/>
        <dbReference type="ChEBI" id="CHEBI:57912"/>
        <dbReference type="ChEBI" id="CHEBI:58866"/>
        <dbReference type="ChEBI" id="CHEBI:59776"/>
        <dbReference type="EC" id="4.2.1.20"/>
    </reaction>
</comment>
<comment type="pathway">
    <text evidence="1">Amino-acid biosynthesis; L-tryptophan biosynthesis; L-tryptophan from chorismate: step 5/5.</text>
</comment>
<comment type="subunit">
    <text evidence="1">Tetramer of two alpha and two beta chains.</text>
</comment>
<comment type="similarity">
    <text evidence="1">Belongs to the TrpA family.</text>
</comment>
<sequence>MTTRIDTKFAELKAEGRPALVTYFMGGDPDLETALKVMKALPKAGADVIELGMPFSDPMADGPAIQAAGLRALNAGQTLAKTLYMAAKFRKEDDTTPIVMMGYYNLIYIYGVERFLTDAKASGVDGLIVVDLPSEMDAELCIPAMKAGINFIRLTTPTTDDKRLPKVLHNSSGFVYYVSMNGITGAAIADTAKVGEAVRHIKKSTDLPICVGFGVKTPEQAAAIATHADGVVVGTAIVNAIAGELDEKGKVKGDPVAAATRLVHALAESVRATRLEAAQ</sequence>
<protein>
    <recommendedName>
        <fullName evidence="1">Tryptophan synthase alpha chain</fullName>
        <ecNumber evidence="1">4.2.1.20</ecNumber>
    </recommendedName>
</protein>
<organism>
    <name type="scientific">Brucella melitensis biotype 2 (strain ATCC 23457)</name>
    <dbReference type="NCBI Taxonomy" id="546272"/>
    <lineage>
        <taxon>Bacteria</taxon>
        <taxon>Pseudomonadati</taxon>
        <taxon>Pseudomonadota</taxon>
        <taxon>Alphaproteobacteria</taxon>
        <taxon>Hyphomicrobiales</taxon>
        <taxon>Brucellaceae</taxon>
        <taxon>Brucella/Ochrobactrum group</taxon>
        <taxon>Brucella</taxon>
    </lineage>
</organism>
<name>TRPA_BRUMB</name>
<dbReference type="EC" id="4.2.1.20" evidence="1"/>
<dbReference type="EMBL" id="CP001488">
    <property type="protein sequence ID" value="ACO01814.1"/>
    <property type="molecule type" value="Genomic_DNA"/>
</dbReference>
<dbReference type="RefSeq" id="WP_004686209.1">
    <property type="nucleotide sequence ID" value="NC_012441.1"/>
</dbReference>
<dbReference type="SMR" id="C0RFZ2"/>
<dbReference type="KEGG" id="bmi:BMEA_A2168"/>
<dbReference type="HOGENOM" id="CLU_016734_0_0_5"/>
<dbReference type="UniPathway" id="UPA00035">
    <property type="reaction ID" value="UER00044"/>
</dbReference>
<dbReference type="Proteomes" id="UP000001748">
    <property type="component" value="Chromosome I"/>
</dbReference>
<dbReference type="GO" id="GO:0005829">
    <property type="term" value="C:cytosol"/>
    <property type="evidence" value="ECO:0007669"/>
    <property type="project" value="TreeGrafter"/>
</dbReference>
<dbReference type="GO" id="GO:0004834">
    <property type="term" value="F:tryptophan synthase activity"/>
    <property type="evidence" value="ECO:0007669"/>
    <property type="project" value="UniProtKB-UniRule"/>
</dbReference>
<dbReference type="CDD" id="cd04724">
    <property type="entry name" value="Tryptophan_synthase_alpha"/>
    <property type="match status" value="1"/>
</dbReference>
<dbReference type="FunFam" id="3.20.20.70:FF:000037">
    <property type="entry name" value="Tryptophan synthase alpha chain"/>
    <property type="match status" value="1"/>
</dbReference>
<dbReference type="Gene3D" id="3.20.20.70">
    <property type="entry name" value="Aldolase class I"/>
    <property type="match status" value="1"/>
</dbReference>
<dbReference type="HAMAP" id="MF_00131">
    <property type="entry name" value="Trp_synth_alpha"/>
    <property type="match status" value="1"/>
</dbReference>
<dbReference type="InterPro" id="IPR013785">
    <property type="entry name" value="Aldolase_TIM"/>
</dbReference>
<dbReference type="InterPro" id="IPR011060">
    <property type="entry name" value="RibuloseP-bd_barrel"/>
</dbReference>
<dbReference type="InterPro" id="IPR018204">
    <property type="entry name" value="Trp_synthase_alpha_AS"/>
</dbReference>
<dbReference type="InterPro" id="IPR002028">
    <property type="entry name" value="Trp_synthase_suA"/>
</dbReference>
<dbReference type="NCBIfam" id="TIGR00262">
    <property type="entry name" value="trpA"/>
    <property type="match status" value="1"/>
</dbReference>
<dbReference type="PANTHER" id="PTHR43406:SF1">
    <property type="entry name" value="TRYPTOPHAN SYNTHASE ALPHA CHAIN, CHLOROPLASTIC"/>
    <property type="match status" value="1"/>
</dbReference>
<dbReference type="PANTHER" id="PTHR43406">
    <property type="entry name" value="TRYPTOPHAN SYNTHASE, ALPHA CHAIN"/>
    <property type="match status" value="1"/>
</dbReference>
<dbReference type="Pfam" id="PF00290">
    <property type="entry name" value="Trp_syntA"/>
    <property type="match status" value="1"/>
</dbReference>
<dbReference type="SUPFAM" id="SSF51366">
    <property type="entry name" value="Ribulose-phoshate binding barrel"/>
    <property type="match status" value="1"/>
</dbReference>
<dbReference type="PROSITE" id="PS00167">
    <property type="entry name" value="TRP_SYNTHASE_ALPHA"/>
    <property type="match status" value="1"/>
</dbReference>
<reference key="1">
    <citation type="submission" date="2009-03" db="EMBL/GenBank/DDBJ databases">
        <title>Brucella melitensis ATCC 23457 whole genome shotgun sequencing project.</title>
        <authorList>
            <person name="Setubal J.C."/>
            <person name="Boyle S."/>
            <person name="Crasta O.R."/>
            <person name="Gillespie J.J."/>
            <person name="Kenyon R.W."/>
            <person name="Lu J."/>
            <person name="Mane S."/>
            <person name="Nagrani S."/>
            <person name="Shallom J.M."/>
            <person name="Shallom S."/>
            <person name="Shukla M."/>
            <person name="Snyder E.E."/>
            <person name="Sobral B.W."/>
            <person name="Wattam A.R."/>
            <person name="Will R."/>
            <person name="Williams K."/>
            <person name="Yoo H."/>
            <person name="Munk C."/>
            <person name="Tapia R."/>
            <person name="Han C."/>
            <person name="Detter J.C."/>
            <person name="Bruce D."/>
            <person name="Brettin T.S."/>
        </authorList>
    </citation>
    <scope>NUCLEOTIDE SEQUENCE [LARGE SCALE GENOMIC DNA]</scope>
    <source>
        <strain>ATCC 23457</strain>
    </source>
</reference>
<gene>
    <name evidence="1" type="primary">trpA</name>
    <name type="ordered locus">BMEA_A2168</name>
</gene>
<evidence type="ECO:0000255" key="1">
    <source>
        <dbReference type="HAMAP-Rule" id="MF_00131"/>
    </source>
</evidence>
<proteinExistence type="inferred from homology"/>
<feature type="chain" id="PRO_1000198701" description="Tryptophan synthase alpha chain">
    <location>
        <begin position="1"/>
        <end position="279"/>
    </location>
</feature>
<feature type="active site" description="Proton acceptor" evidence="1">
    <location>
        <position position="50"/>
    </location>
</feature>
<feature type="active site" description="Proton acceptor" evidence="1">
    <location>
        <position position="61"/>
    </location>
</feature>
<keyword id="KW-0028">Amino-acid biosynthesis</keyword>
<keyword id="KW-0057">Aromatic amino acid biosynthesis</keyword>
<keyword id="KW-0456">Lyase</keyword>
<keyword id="KW-0822">Tryptophan biosynthesis</keyword>
<accession>C0RFZ2</accession>